<feature type="chain" id="PRO_1000133212" description="ATP-dependent dethiobiotin synthetase BioD">
    <location>
        <begin position="1"/>
        <end position="221"/>
    </location>
</feature>
<feature type="active site" evidence="2">
    <location>
        <position position="39"/>
    </location>
</feature>
<feature type="binding site" evidence="2">
    <location>
        <begin position="12"/>
        <end position="17"/>
    </location>
    <ligand>
        <name>ATP</name>
        <dbReference type="ChEBI" id="CHEBI:30616"/>
    </ligand>
</feature>
<feature type="binding site" evidence="2">
    <location>
        <position position="16"/>
    </location>
    <ligand>
        <name>Mg(2+)</name>
        <dbReference type="ChEBI" id="CHEBI:18420"/>
    </ligand>
</feature>
<feature type="binding site" evidence="2">
    <location>
        <position position="43"/>
    </location>
    <ligand>
        <name>substrate</name>
    </ligand>
</feature>
<feature type="binding site" evidence="2">
    <location>
        <position position="47"/>
    </location>
    <ligand>
        <name>ATP</name>
        <dbReference type="ChEBI" id="CHEBI:30616"/>
    </ligand>
</feature>
<feature type="binding site" evidence="2">
    <location>
        <position position="47"/>
    </location>
    <ligand>
        <name>Mg(2+)</name>
        <dbReference type="ChEBI" id="CHEBI:18420"/>
    </ligand>
</feature>
<feature type="binding site" evidence="2">
    <location>
        <begin position="105"/>
        <end position="108"/>
    </location>
    <ligand>
        <name>ATP</name>
        <dbReference type="ChEBI" id="CHEBI:30616"/>
    </ligand>
</feature>
<feature type="binding site" evidence="2">
    <location>
        <position position="105"/>
    </location>
    <ligand>
        <name>Mg(2+)</name>
        <dbReference type="ChEBI" id="CHEBI:18420"/>
    </ligand>
</feature>
<feature type="binding site" evidence="2">
    <location>
        <begin position="165"/>
        <end position="166"/>
    </location>
    <ligand>
        <name>ATP</name>
        <dbReference type="ChEBI" id="CHEBI:30616"/>
    </ligand>
</feature>
<evidence type="ECO:0000250" key="1">
    <source>
        <dbReference type="UniProtKB" id="Q55849"/>
    </source>
</evidence>
<evidence type="ECO:0000255" key="2">
    <source>
        <dbReference type="HAMAP-Rule" id="MF_00336"/>
    </source>
</evidence>
<evidence type="ECO:0000305" key="3"/>
<organism>
    <name type="scientific">Crocosphaera subtropica (strain ATCC 51142 / BH68)</name>
    <name type="common">Cyanothece sp. (strain ATCC 51142)</name>
    <dbReference type="NCBI Taxonomy" id="43989"/>
    <lineage>
        <taxon>Bacteria</taxon>
        <taxon>Bacillati</taxon>
        <taxon>Cyanobacteriota</taxon>
        <taxon>Cyanophyceae</taxon>
        <taxon>Oscillatoriophycideae</taxon>
        <taxon>Chroococcales</taxon>
        <taxon>Aphanothecaceae</taxon>
        <taxon>Crocosphaera</taxon>
        <taxon>Crocosphaera subtropica</taxon>
    </lineage>
</organism>
<comment type="function">
    <text evidence="1 2">Catalyzes a mechanistically unusual reaction, the ATP-dependent insertion of CO2 between the N7 and N8 nitrogen atoms of 7,8-diaminopelargonic acid (DAPA, also called 7,8-diammoniononanoate) to form a ureido ring (By similarity). This cyanobacterium does not encode bioA (which catalyzes the formation of the precursor for this reaction in the cannonical pathway), instead it encodes bioU, which replaces bioA and also performs the first half of the cannonical BioD reaction. Thus in this organism BioD has a different substrate (By similarity).</text>
</comment>
<comment type="catalytic activity">
    <reaction evidence="2">
        <text>(7R,8S)-7,8-diammoniononanoate + CO2 + ATP = (4R,5S)-dethiobiotin + ADP + phosphate + 3 H(+)</text>
        <dbReference type="Rhea" id="RHEA:15805"/>
        <dbReference type="ChEBI" id="CHEBI:15378"/>
        <dbReference type="ChEBI" id="CHEBI:16526"/>
        <dbReference type="ChEBI" id="CHEBI:30616"/>
        <dbReference type="ChEBI" id="CHEBI:43474"/>
        <dbReference type="ChEBI" id="CHEBI:149469"/>
        <dbReference type="ChEBI" id="CHEBI:149473"/>
        <dbReference type="ChEBI" id="CHEBI:456216"/>
        <dbReference type="EC" id="6.3.3.3"/>
    </reaction>
</comment>
<comment type="catalytic activity">
    <reaction evidence="1 3">
        <text>(7R,8S)-8-amino-7-(carboxyamino)nonanoate + ATP = (4R,5S)-dethiobiotin + ADP + phosphate + H(+)</text>
        <dbReference type="Rhea" id="RHEA:63684"/>
        <dbReference type="ChEBI" id="CHEBI:15378"/>
        <dbReference type="ChEBI" id="CHEBI:30616"/>
        <dbReference type="ChEBI" id="CHEBI:43474"/>
        <dbReference type="ChEBI" id="CHEBI:149470"/>
        <dbReference type="ChEBI" id="CHEBI:149473"/>
        <dbReference type="ChEBI" id="CHEBI:456216"/>
    </reaction>
</comment>
<comment type="cofactor">
    <cofactor evidence="2">
        <name>Mg(2+)</name>
        <dbReference type="ChEBI" id="CHEBI:18420"/>
    </cofactor>
</comment>
<comment type="pathway">
    <text evidence="2">Cofactor biosynthesis; biotin biosynthesis; biotin from 7,8-diaminononanoate: step 1/2.</text>
</comment>
<comment type="subunit">
    <text evidence="2">Homodimer.</text>
</comment>
<comment type="subcellular location">
    <subcellularLocation>
        <location evidence="2">Cytoplasm</location>
    </subcellularLocation>
</comment>
<comment type="similarity">
    <text evidence="2">Belongs to the dethiobiotin synthetase family.</text>
</comment>
<name>BIOD_CROS5</name>
<sequence length="221" mass="24103">MTTLFIVGTDTEVGKTVVTSALAAYWQTYHSSESLGVIKLLQTGIGDVEHYQRLLPHVEVVNPLRYETPVAPPVAAEKENRSIPLDQVWQGLNDLQQRKNLVLAEGLGGLGSPVTWELTVADLAGEWGLPTVLVVPVKLGAIAQTVANVALARQYKVNLKGIIFSCPRPLSHEEIVNFAPITLIESLTKTPVLGMISYLENIEDITKLAHIASSLDLEMLF</sequence>
<keyword id="KW-0067">ATP-binding</keyword>
<keyword id="KW-0093">Biotin biosynthesis</keyword>
<keyword id="KW-0963">Cytoplasm</keyword>
<keyword id="KW-0436">Ligase</keyword>
<keyword id="KW-0460">Magnesium</keyword>
<keyword id="KW-0479">Metal-binding</keyword>
<keyword id="KW-0547">Nucleotide-binding</keyword>
<keyword id="KW-1185">Reference proteome</keyword>
<dbReference type="EC" id="6.3.3.3" evidence="2"/>
<dbReference type="EMBL" id="CP000806">
    <property type="protein sequence ID" value="ACB52864.1"/>
    <property type="molecule type" value="Genomic_DNA"/>
</dbReference>
<dbReference type="RefSeq" id="WP_009545318.1">
    <property type="nucleotide sequence ID" value="NC_010546.1"/>
</dbReference>
<dbReference type="SMR" id="B1WZW5"/>
<dbReference type="STRING" id="43989.cce_3516"/>
<dbReference type="KEGG" id="cyt:cce_3516"/>
<dbReference type="eggNOG" id="COG0132">
    <property type="taxonomic scope" value="Bacteria"/>
</dbReference>
<dbReference type="HOGENOM" id="CLU_072551_3_1_3"/>
<dbReference type="OrthoDB" id="9802097at2"/>
<dbReference type="UniPathway" id="UPA00078">
    <property type="reaction ID" value="UER00161"/>
</dbReference>
<dbReference type="Proteomes" id="UP000001203">
    <property type="component" value="Chromosome circular"/>
</dbReference>
<dbReference type="GO" id="GO:0005829">
    <property type="term" value="C:cytosol"/>
    <property type="evidence" value="ECO:0007669"/>
    <property type="project" value="TreeGrafter"/>
</dbReference>
<dbReference type="GO" id="GO:0005524">
    <property type="term" value="F:ATP binding"/>
    <property type="evidence" value="ECO:0007669"/>
    <property type="project" value="UniProtKB-UniRule"/>
</dbReference>
<dbReference type="GO" id="GO:0004141">
    <property type="term" value="F:dethiobiotin synthase activity"/>
    <property type="evidence" value="ECO:0007669"/>
    <property type="project" value="UniProtKB-UniRule"/>
</dbReference>
<dbReference type="GO" id="GO:0000287">
    <property type="term" value="F:magnesium ion binding"/>
    <property type="evidence" value="ECO:0007669"/>
    <property type="project" value="UniProtKB-UniRule"/>
</dbReference>
<dbReference type="GO" id="GO:0009102">
    <property type="term" value="P:biotin biosynthetic process"/>
    <property type="evidence" value="ECO:0007669"/>
    <property type="project" value="UniProtKB-UniRule"/>
</dbReference>
<dbReference type="CDD" id="cd03109">
    <property type="entry name" value="DTBS"/>
    <property type="match status" value="1"/>
</dbReference>
<dbReference type="Gene3D" id="3.40.50.300">
    <property type="entry name" value="P-loop containing nucleotide triphosphate hydrolases"/>
    <property type="match status" value="1"/>
</dbReference>
<dbReference type="HAMAP" id="MF_00336">
    <property type="entry name" value="BioD"/>
    <property type="match status" value="1"/>
</dbReference>
<dbReference type="InterPro" id="IPR004472">
    <property type="entry name" value="DTB_synth_BioD"/>
</dbReference>
<dbReference type="InterPro" id="IPR027417">
    <property type="entry name" value="P-loop_NTPase"/>
</dbReference>
<dbReference type="NCBIfam" id="TIGR00347">
    <property type="entry name" value="bioD"/>
    <property type="match status" value="1"/>
</dbReference>
<dbReference type="PANTHER" id="PTHR43210:SF2">
    <property type="entry name" value="ATP-DEPENDENT DETHIOBIOTIN SYNTHETASE BIOD 2"/>
    <property type="match status" value="1"/>
</dbReference>
<dbReference type="PANTHER" id="PTHR43210">
    <property type="entry name" value="DETHIOBIOTIN SYNTHETASE"/>
    <property type="match status" value="1"/>
</dbReference>
<dbReference type="Pfam" id="PF13500">
    <property type="entry name" value="AAA_26"/>
    <property type="match status" value="1"/>
</dbReference>
<dbReference type="PIRSF" id="PIRSF006755">
    <property type="entry name" value="DTB_synth"/>
    <property type="match status" value="1"/>
</dbReference>
<dbReference type="SUPFAM" id="SSF52540">
    <property type="entry name" value="P-loop containing nucleoside triphosphate hydrolases"/>
    <property type="match status" value="1"/>
</dbReference>
<proteinExistence type="inferred from homology"/>
<reference key="1">
    <citation type="journal article" date="2008" name="Proc. Natl. Acad. Sci. U.S.A.">
        <title>The genome of Cyanothece 51142, a unicellular diazotrophic cyanobacterium important in the marine nitrogen cycle.</title>
        <authorList>
            <person name="Welsh E.A."/>
            <person name="Liberton M."/>
            <person name="Stoeckel J."/>
            <person name="Loh T."/>
            <person name="Elvitigala T."/>
            <person name="Wang C."/>
            <person name="Wollam A."/>
            <person name="Fulton R.S."/>
            <person name="Clifton S.W."/>
            <person name="Jacobs J.M."/>
            <person name="Aurora R."/>
            <person name="Ghosh B.K."/>
            <person name="Sherman L.A."/>
            <person name="Smith R.D."/>
            <person name="Wilson R.K."/>
            <person name="Pakrasi H.B."/>
        </authorList>
    </citation>
    <scope>NUCLEOTIDE SEQUENCE [LARGE SCALE GENOMIC DNA]</scope>
    <source>
        <strain>ATCC 51142 / BH68</strain>
    </source>
</reference>
<protein>
    <recommendedName>
        <fullName evidence="2">ATP-dependent dethiobiotin synthetase BioD</fullName>
        <ecNumber evidence="2">6.3.3.3</ecNumber>
    </recommendedName>
    <alternativeName>
        <fullName evidence="2">DTB synthetase</fullName>
        <shortName evidence="2">DTBS</shortName>
    </alternativeName>
    <alternativeName>
        <fullName evidence="2">Dethiobiotin synthase</fullName>
    </alternativeName>
</protein>
<accession>B1WZW5</accession>
<gene>
    <name evidence="2" type="primary">bioD</name>
    <name type="ordered locus">cce_3516</name>
</gene>